<evidence type="ECO:0000255" key="1">
    <source>
        <dbReference type="HAMAP-Rule" id="MF_01398"/>
    </source>
</evidence>
<sequence length="184" mass="20872">MKNVTDSFVSLGHWPSAGSFGFNTDILATNPINLSVVLGVLIFFGKGVLSDLLDNRKQRILNTIRNSEELRGGAIEQLEKARSRLRKVETEAEQFRVNGYSEIEREKLNLINSTYKTLEQLENYKNETIQFEQQRAINQVRQRVFQQALRGALGTLNSCLNNELHLRTISANIGMLGTMKEITD</sequence>
<accession>Q2MIK1</accession>
<proteinExistence type="inferred from homology"/>
<protein>
    <recommendedName>
        <fullName evidence="1">ATP synthase subunit b, chloroplastic</fullName>
    </recommendedName>
    <alternativeName>
        <fullName evidence="1">ATP synthase F(0) sector subunit b</fullName>
    </alternativeName>
    <alternativeName>
        <fullName evidence="1">ATPase subunit I</fullName>
    </alternativeName>
</protein>
<comment type="function">
    <text evidence="1">F(1)F(0) ATP synthase produces ATP from ADP in the presence of a proton or sodium gradient. F-type ATPases consist of two structural domains, F(1) containing the extramembraneous catalytic core and F(0) containing the membrane proton channel, linked together by a central stalk and a peripheral stalk. During catalysis, ATP synthesis in the catalytic domain of F(1) is coupled via a rotary mechanism of the central stalk subunits to proton translocation.</text>
</comment>
<comment type="function">
    <text evidence="1">Component of the F(0) channel, it forms part of the peripheral stalk, linking F(1) to F(0).</text>
</comment>
<comment type="subunit">
    <text evidence="1">F-type ATPases have 2 components, F(1) - the catalytic core - and F(0) - the membrane proton channel. F(1) has five subunits: alpha(3), beta(3), gamma(1), delta(1), epsilon(1). F(0) has four main subunits: a(1), b(1), b'(1) and c(10-14). The alpha and beta chains form an alternating ring which encloses part of the gamma chain. F(1) is attached to F(0) by a central stalk formed by the gamma and epsilon chains, while a peripheral stalk is formed by the delta, b and b' chains.</text>
</comment>
<comment type="subcellular location">
    <subcellularLocation>
        <location evidence="1">Plastid</location>
        <location evidence="1">Chloroplast thylakoid membrane</location>
        <topology evidence="1">Single-pass membrane protein</topology>
    </subcellularLocation>
</comment>
<comment type="miscellaneous">
    <text>In plastids the F-type ATPase is also known as CF(1)CF(0).</text>
</comment>
<comment type="similarity">
    <text evidence="1">Belongs to the ATPase B chain family.</text>
</comment>
<name>ATPF_SOLBU</name>
<reference key="1">
    <citation type="journal article" date="2006" name="Theor. Appl. Genet.">
        <title>Complete chloroplast genome sequences of Solanum bulbocastanum, Solanum lycopersicum and comparative analyses with other Solanaceae genomes.</title>
        <authorList>
            <person name="Daniell H."/>
            <person name="Lee S.-B."/>
            <person name="Grevich J."/>
            <person name="Saski C."/>
            <person name="Quesada-Vargas T."/>
            <person name="Guda C."/>
            <person name="Tomkins J."/>
            <person name="Jansen R.K."/>
        </authorList>
    </citation>
    <scope>NUCLEOTIDE SEQUENCE [LARGE SCALE GENOMIC DNA]</scope>
    <source>
        <strain>cv. PT29</strain>
    </source>
</reference>
<geneLocation type="chloroplast"/>
<feature type="chain" id="PRO_0000368979" description="ATP synthase subunit b, chloroplastic">
    <location>
        <begin position="1"/>
        <end position="184"/>
    </location>
</feature>
<feature type="transmembrane region" description="Helical" evidence="1">
    <location>
        <begin position="27"/>
        <end position="49"/>
    </location>
</feature>
<gene>
    <name evidence="1" type="primary">atpF</name>
</gene>
<keyword id="KW-0066">ATP synthesis</keyword>
<keyword id="KW-0138">CF(0)</keyword>
<keyword id="KW-0150">Chloroplast</keyword>
<keyword id="KW-0375">Hydrogen ion transport</keyword>
<keyword id="KW-0406">Ion transport</keyword>
<keyword id="KW-0472">Membrane</keyword>
<keyword id="KW-0934">Plastid</keyword>
<keyword id="KW-0793">Thylakoid</keyword>
<keyword id="KW-0812">Transmembrane</keyword>
<keyword id="KW-1133">Transmembrane helix</keyword>
<keyword id="KW-0813">Transport</keyword>
<organism>
    <name type="scientific">Solanum bulbocastanum</name>
    <name type="common">Wild potato</name>
    <dbReference type="NCBI Taxonomy" id="147425"/>
    <lineage>
        <taxon>Eukaryota</taxon>
        <taxon>Viridiplantae</taxon>
        <taxon>Streptophyta</taxon>
        <taxon>Embryophyta</taxon>
        <taxon>Tracheophyta</taxon>
        <taxon>Spermatophyta</taxon>
        <taxon>Magnoliopsida</taxon>
        <taxon>eudicotyledons</taxon>
        <taxon>Gunneridae</taxon>
        <taxon>Pentapetalae</taxon>
        <taxon>asterids</taxon>
        <taxon>lamiids</taxon>
        <taxon>Solanales</taxon>
        <taxon>Solanaceae</taxon>
        <taxon>Solanoideae</taxon>
        <taxon>Solaneae</taxon>
        <taxon>Solanum</taxon>
    </lineage>
</organism>
<dbReference type="EMBL" id="DQ347958">
    <property type="protein sequence ID" value="ABC56199.1"/>
    <property type="molecule type" value="Genomic_DNA"/>
</dbReference>
<dbReference type="RefSeq" id="YP_538834.1">
    <property type="nucleotide sequence ID" value="NC_007943.1"/>
</dbReference>
<dbReference type="SMR" id="Q2MIK1"/>
<dbReference type="GeneID" id="3989462"/>
<dbReference type="GO" id="GO:0009535">
    <property type="term" value="C:chloroplast thylakoid membrane"/>
    <property type="evidence" value="ECO:0007669"/>
    <property type="project" value="UniProtKB-SubCell"/>
</dbReference>
<dbReference type="GO" id="GO:0045259">
    <property type="term" value="C:proton-transporting ATP synthase complex"/>
    <property type="evidence" value="ECO:0007669"/>
    <property type="project" value="UniProtKB-KW"/>
</dbReference>
<dbReference type="GO" id="GO:0046933">
    <property type="term" value="F:proton-transporting ATP synthase activity, rotational mechanism"/>
    <property type="evidence" value="ECO:0007669"/>
    <property type="project" value="UniProtKB-UniRule"/>
</dbReference>
<dbReference type="CDD" id="cd06503">
    <property type="entry name" value="ATP-synt_Fo_b"/>
    <property type="match status" value="1"/>
</dbReference>
<dbReference type="HAMAP" id="MF_01398">
    <property type="entry name" value="ATP_synth_b_bprime"/>
    <property type="match status" value="1"/>
</dbReference>
<dbReference type="InterPro" id="IPR002146">
    <property type="entry name" value="ATP_synth_b/b'su_bac/chlpt"/>
</dbReference>
<dbReference type="PANTHER" id="PTHR34264">
    <property type="entry name" value="ATP SYNTHASE SUBUNIT B, CHLOROPLASTIC"/>
    <property type="match status" value="1"/>
</dbReference>
<dbReference type="PANTHER" id="PTHR34264:SF3">
    <property type="entry name" value="ATP SYNTHASE SUBUNIT B, CHLOROPLASTIC"/>
    <property type="match status" value="1"/>
</dbReference>
<dbReference type="Pfam" id="PF00430">
    <property type="entry name" value="ATP-synt_B"/>
    <property type="match status" value="1"/>
</dbReference>